<proteinExistence type="inferred from homology"/>
<feature type="chain" id="PRO_0000241646" description="Large ribosomal subunit protein uL24">
    <location>
        <begin position="1"/>
        <end position="105"/>
    </location>
</feature>
<keyword id="KW-0687">Ribonucleoprotein</keyword>
<keyword id="KW-0689">Ribosomal protein</keyword>
<keyword id="KW-0694">RNA-binding</keyword>
<keyword id="KW-0699">rRNA-binding</keyword>
<name>RL24_PSYCK</name>
<evidence type="ECO:0000255" key="1">
    <source>
        <dbReference type="HAMAP-Rule" id="MF_01326"/>
    </source>
</evidence>
<evidence type="ECO:0000305" key="2"/>
<protein>
    <recommendedName>
        <fullName evidence="1">Large ribosomal subunit protein uL24</fullName>
    </recommendedName>
    <alternativeName>
        <fullName evidence="2">50S ribosomal protein L24</fullName>
    </alternativeName>
</protein>
<sequence>MSKLRKGDTVIVIAGKDKGKQGTVQAVKNDRIKVEGINIVTKHQKPNQATGVEGGILKQEAFLHISNVAILNAQTQKADRITYQFGEDGKKQRLYRSNGEVVATA</sequence>
<gene>
    <name evidence="1" type="primary">rplX</name>
    <name type="ordered locus">Pcryo_0495</name>
</gene>
<accession>Q1QDH5</accession>
<comment type="function">
    <text evidence="1">One of two assembly initiator proteins, it binds directly to the 5'-end of the 23S rRNA, where it nucleates assembly of the 50S subunit.</text>
</comment>
<comment type="function">
    <text evidence="1">One of the proteins that surrounds the polypeptide exit tunnel on the outside of the subunit.</text>
</comment>
<comment type="subunit">
    <text evidence="1">Part of the 50S ribosomal subunit.</text>
</comment>
<comment type="similarity">
    <text evidence="1">Belongs to the universal ribosomal protein uL24 family.</text>
</comment>
<organism>
    <name type="scientific">Psychrobacter cryohalolentis (strain ATCC BAA-1226 / DSM 17306 / VKM B-2378 / K5)</name>
    <dbReference type="NCBI Taxonomy" id="335284"/>
    <lineage>
        <taxon>Bacteria</taxon>
        <taxon>Pseudomonadati</taxon>
        <taxon>Pseudomonadota</taxon>
        <taxon>Gammaproteobacteria</taxon>
        <taxon>Moraxellales</taxon>
        <taxon>Moraxellaceae</taxon>
        <taxon>Psychrobacter</taxon>
    </lineage>
</organism>
<dbReference type="EMBL" id="CP000323">
    <property type="protein sequence ID" value="ABE74278.1"/>
    <property type="molecule type" value="Genomic_DNA"/>
</dbReference>
<dbReference type="RefSeq" id="WP_011512857.1">
    <property type="nucleotide sequence ID" value="NC_007969.1"/>
</dbReference>
<dbReference type="SMR" id="Q1QDH5"/>
<dbReference type="STRING" id="335284.Pcryo_0495"/>
<dbReference type="KEGG" id="pcr:Pcryo_0495"/>
<dbReference type="eggNOG" id="COG0198">
    <property type="taxonomic scope" value="Bacteria"/>
</dbReference>
<dbReference type="HOGENOM" id="CLU_093315_2_2_6"/>
<dbReference type="Proteomes" id="UP000002425">
    <property type="component" value="Chromosome"/>
</dbReference>
<dbReference type="GO" id="GO:1990904">
    <property type="term" value="C:ribonucleoprotein complex"/>
    <property type="evidence" value="ECO:0007669"/>
    <property type="project" value="UniProtKB-KW"/>
</dbReference>
<dbReference type="GO" id="GO:0005840">
    <property type="term" value="C:ribosome"/>
    <property type="evidence" value="ECO:0007669"/>
    <property type="project" value="UniProtKB-KW"/>
</dbReference>
<dbReference type="GO" id="GO:0019843">
    <property type="term" value="F:rRNA binding"/>
    <property type="evidence" value="ECO:0007669"/>
    <property type="project" value="UniProtKB-UniRule"/>
</dbReference>
<dbReference type="GO" id="GO:0003735">
    <property type="term" value="F:structural constituent of ribosome"/>
    <property type="evidence" value="ECO:0007669"/>
    <property type="project" value="InterPro"/>
</dbReference>
<dbReference type="GO" id="GO:0006412">
    <property type="term" value="P:translation"/>
    <property type="evidence" value="ECO:0007669"/>
    <property type="project" value="UniProtKB-UniRule"/>
</dbReference>
<dbReference type="CDD" id="cd06089">
    <property type="entry name" value="KOW_RPL26"/>
    <property type="match status" value="1"/>
</dbReference>
<dbReference type="FunFam" id="2.30.30.30:FF:000004">
    <property type="entry name" value="50S ribosomal protein L24"/>
    <property type="match status" value="1"/>
</dbReference>
<dbReference type="Gene3D" id="2.30.30.30">
    <property type="match status" value="1"/>
</dbReference>
<dbReference type="HAMAP" id="MF_01326_B">
    <property type="entry name" value="Ribosomal_uL24_B"/>
    <property type="match status" value="1"/>
</dbReference>
<dbReference type="InterPro" id="IPR005824">
    <property type="entry name" value="KOW"/>
</dbReference>
<dbReference type="InterPro" id="IPR014722">
    <property type="entry name" value="Rib_uL2_dom2"/>
</dbReference>
<dbReference type="InterPro" id="IPR003256">
    <property type="entry name" value="Ribosomal_uL24"/>
</dbReference>
<dbReference type="InterPro" id="IPR005825">
    <property type="entry name" value="Ribosomal_uL24_CS"/>
</dbReference>
<dbReference type="InterPro" id="IPR041988">
    <property type="entry name" value="Ribosomal_uL24_KOW"/>
</dbReference>
<dbReference type="InterPro" id="IPR008991">
    <property type="entry name" value="Translation_prot_SH3-like_sf"/>
</dbReference>
<dbReference type="NCBIfam" id="TIGR01079">
    <property type="entry name" value="rplX_bact"/>
    <property type="match status" value="1"/>
</dbReference>
<dbReference type="PANTHER" id="PTHR12903">
    <property type="entry name" value="MITOCHONDRIAL RIBOSOMAL PROTEIN L24"/>
    <property type="match status" value="1"/>
</dbReference>
<dbReference type="Pfam" id="PF00467">
    <property type="entry name" value="KOW"/>
    <property type="match status" value="1"/>
</dbReference>
<dbReference type="Pfam" id="PF17136">
    <property type="entry name" value="ribosomal_L24"/>
    <property type="match status" value="1"/>
</dbReference>
<dbReference type="SMART" id="SM00739">
    <property type="entry name" value="KOW"/>
    <property type="match status" value="1"/>
</dbReference>
<dbReference type="SUPFAM" id="SSF50104">
    <property type="entry name" value="Translation proteins SH3-like domain"/>
    <property type="match status" value="1"/>
</dbReference>
<dbReference type="PROSITE" id="PS01108">
    <property type="entry name" value="RIBOSOMAL_L24"/>
    <property type="match status" value="1"/>
</dbReference>
<reference key="1">
    <citation type="submission" date="2006-03" db="EMBL/GenBank/DDBJ databases">
        <title>Complete sequence of chromosome of Psychrobacter cryohalolentis K5.</title>
        <authorList>
            <consortium name="US DOE Joint Genome Institute"/>
            <person name="Copeland A."/>
            <person name="Lucas S."/>
            <person name="Lapidus A."/>
            <person name="Barry K."/>
            <person name="Detter J.C."/>
            <person name="Glavina T."/>
            <person name="Hammon N."/>
            <person name="Israni S."/>
            <person name="Dalin E."/>
            <person name="Tice H."/>
            <person name="Pitluck S."/>
            <person name="Brettin T."/>
            <person name="Bruce D."/>
            <person name="Han C."/>
            <person name="Tapia R."/>
            <person name="Sims D.R."/>
            <person name="Gilna P."/>
            <person name="Schmutz J."/>
            <person name="Larimer F."/>
            <person name="Land M."/>
            <person name="Hauser L."/>
            <person name="Kyrpides N."/>
            <person name="Kim E."/>
            <person name="Richardson P."/>
        </authorList>
    </citation>
    <scope>NUCLEOTIDE SEQUENCE [LARGE SCALE GENOMIC DNA]</scope>
    <source>
        <strain>ATCC BAA-1226 / DSM 17306 / VKM B-2378 / K5</strain>
    </source>
</reference>